<sequence length="187" mass="20594">MAKEEYVSRMLVMLIMIMPLVAQGSRLHSWANRLEETGKDKVTNLQFYFHDTLSGKNPTAVKVAQGTDTEKSPTLFGAVFMVDDALTETADPKSKLVGRAQGLYGSSCKEEVGLIMAMSFCFEDGPYKDSTISMIGKNSAMNPIREMPIVGGTGMFRMARGYAIARTNWFDPKTGDAIVGYNVTIMH</sequence>
<accession>Q84TH6</accession>
<accession>Q9SKQ3</accession>
<proteinExistence type="evidence at transcript level"/>
<feature type="signal peptide" evidence="2">
    <location>
        <begin position="1"/>
        <end position="24"/>
    </location>
</feature>
<feature type="chain" id="PRO_0000422854" description="Dirigent protein 23">
    <location>
        <begin position="25"/>
        <end position="187"/>
    </location>
</feature>
<feature type="glycosylation site" description="N-linked (GlcNAc...) asparagine" evidence="2">
    <location>
        <position position="182"/>
    </location>
</feature>
<keyword id="KW-0052">Apoplast</keyword>
<keyword id="KW-0325">Glycoprotein</keyword>
<keyword id="KW-1185">Reference proteome</keyword>
<keyword id="KW-0964">Secreted</keyword>
<keyword id="KW-0732">Signal</keyword>
<dbReference type="EMBL" id="AC006264">
    <property type="protein sequence ID" value="AAD29806.1"/>
    <property type="status" value="ALT_SEQ"/>
    <property type="molecule type" value="Genomic_DNA"/>
</dbReference>
<dbReference type="EMBL" id="CP002685">
    <property type="protein sequence ID" value="AEC07123.1"/>
    <property type="molecule type" value="Genomic_DNA"/>
</dbReference>
<dbReference type="EMBL" id="CP002685">
    <property type="protein sequence ID" value="ANM61894.1"/>
    <property type="molecule type" value="Genomic_DNA"/>
</dbReference>
<dbReference type="EMBL" id="BT005788">
    <property type="protein sequence ID" value="AAO64191.1"/>
    <property type="molecule type" value="mRNA"/>
</dbReference>
<dbReference type="EMBL" id="BT015116">
    <property type="protein sequence ID" value="AAT71988.1"/>
    <property type="molecule type" value="mRNA"/>
</dbReference>
<dbReference type="EMBL" id="AK228386">
    <property type="protein sequence ID" value="BAF00324.1"/>
    <property type="molecule type" value="mRNA"/>
</dbReference>
<dbReference type="PIR" id="B84597">
    <property type="entry name" value="B84597"/>
</dbReference>
<dbReference type="RefSeq" id="NP_001324083.1">
    <property type="nucleotide sequence ID" value="NM_001335731.1"/>
</dbReference>
<dbReference type="RefSeq" id="NP_850009.1">
    <property type="nucleotide sequence ID" value="NM_179678.2"/>
</dbReference>
<dbReference type="SMR" id="Q84TH6"/>
<dbReference type="STRING" id="3702.Q84TH6"/>
<dbReference type="GlyCosmos" id="Q84TH6">
    <property type="glycosylation" value="1 site, No reported glycans"/>
</dbReference>
<dbReference type="GlyGen" id="Q84TH6">
    <property type="glycosylation" value="1 site"/>
</dbReference>
<dbReference type="PaxDb" id="3702-AT2G21100.1"/>
<dbReference type="ProteomicsDB" id="222216"/>
<dbReference type="EnsemblPlants" id="AT2G21100.1">
    <property type="protein sequence ID" value="AT2G21100.1"/>
    <property type="gene ID" value="AT2G21100"/>
</dbReference>
<dbReference type="EnsemblPlants" id="AT2G21100.2">
    <property type="protein sequence ID" value="AT2G21100.2"/>
    <property type="gene ID" value="AT2G21100"/>
</dbReference>
<dbReference type="GeneID" id="816645"/>
<dbReference type="Gramene" id="AT2G21100.1">
    <property type="protein sequence ID" value="AT2G21100.1"/>
    <property type="gene ID" value="AT2G21100"/>
</dbReference>
<dbReference type="Gramene" id="AT2G21100.2">
    <property type="protein sequence ID" value="AT2G21100.2"/>
    <property type="gene ID" value="AT2G21100"/>
</dbReference>
<dbReference type="KEGG" id="ath:AT2G21100"/>
<dbReference type="Araport" id="AT2G21100"/>
<dbReference type="TAIR" id="AT2G21100"/>
<dbReference type="eggNOG" id="ENOG502RY4Y">
    <property type="taxonomic scope" value="Eukaryota"/>
</dbReference>
<dbReference type="HOGENOM" id="CLU_087111_2_1_1"/>
<dbReference type="InParanoid" id="Q84TH6"/>
<dbReference type="OMA" id="YAIAKTH"/>
<dbReference type="PhylomeDB" id="Q84TH6"/>
<dbReference type="PRO" id="PR:Q84TH6"/>
<dbReference type="Proteomes" id="UP000006548">
    <property type="component" value="Chromosome 2"/>
</dbReference>
<dbReference type="ExpressionAtlas" id="Q84TH6">
    <property type="expression patterns" value="baseline and differential"/>
</dbReference>
<dbReference type="GO" id="GO:0048046">
    <property type="term" value="C:apoplast"/>
    <property type="evidence" value="ECO:0007669"/>
    <property type="project" value="UniProtKB-SubCell"/>
</dbReference>
<dbReference type="GO" id="GO:0009699">
    <property type="term" value="P:phenylpropanoid biosynthetic process"/>
    <property type="evidence" value="ECO:0007669"/>
    <property type="project" value="UniProtKB-ARBA"/>
</dbReference>
<dbReference type="Gene3D" id="2.40.480.10">
    <property type="entry name" value="Allene oxide cyclase-like"/>
    <property type="match status" value="1"/>
</dbReference>
<dbReference type="InterPro" id="IPR044859">
    <property type="entry name" value="Allene_oxi_cyc_Dirigent"/>
</dbReference>
<dbReference type="InterPro" id="IPR004265">
    <property type="entry name" value="Dirigent"/>
</dbReference>
<dbReference type="PANTHER" id="PTHR21495">
    <property type="entry name" value="NUCLEOPORIN-RELATED"/>
    <property type="match status" value="1"/>
</dbReference>
<dbReference type="Pfam" id="PF03018">
    <property type="entry name" value="Dirigent"/>
    <property type="match status" value="1"/>
</dbReference>
<gene>
    <name type="primary">DIR23</name>
    <name type="ordered locus">At2g21100</name>
    <name type="ORF">F26H11.14</name>
</gene>
<evidence type="ECO:0000250" key="1"/>
<evidence type="ECO:0000255" key="2"/>
<evidence type="ECO:0000305" key="3"/>
<protein>
    <recommendedName>
        <fullName>Dirigent protein 23</fullName>
        <shortName>AtDIR23</shortName>
    </recommendedName>
</protein>
<reference key="1">
    <citation type="journal article" date="1999" name="Nature">
        <title>Sequence and analysis of chromosome 2 of the plant Arabidopsis thaliana.</title>
        <authorList>
            <person name="Lin X."/>
            <person name="Kaul S."/>
            <person name="Rounsley S.D."/>
            <person name="Shea T.P."/>
            <person name="Benito M.-I."/>
            <person name="Town C.D."/>
            <person name="Fujii C.Y."/>
            <person name="Mason T.M."/>
            <person name="Bowman C.L."/>
            <person name="Barnstead M.E."/>
            <person name="Feldblyum T.V."/>
            <person name="Buell C.R."/>
            <person name="Ketchum K.A."/>
            <person name="Lee J.J."/>
            <person name="Ronning C.M."/>
            <person name="Koo H.L."/>
            <person name="Moffat K.S."/>
            <person name="Cronin L.A."/>
            <person name="Shen M."/>
            <person name="Pai G."/>
            <person name="Van Aken S."/>
            <person name="Umayam L."/>
            <person name="Tallon L.J."/>
            <person name="Gill J.E."/>
            <person name="Adams M.D."/>
            <person name="Carrera A.J."/>
            <person name="Creasy T.H."/>
            <person name="Goodman H.M."/>
            <person name="Somerville C.R."/>
            <person name="Copenhaver G.P."/>
            <person name="Preuss D."/>
            <person name="Nierman W.C."/>
            <person name="White O."/>
            <person name="Eisen J.A."/>
            <person name="Salzberg S.L."/>
            <person name="Fraser C.M."/>
            <person name="Venter J.C."/>
        </authorList>
    </citation>
    <scope>NUCLEOTIDE SEQUENCE [LARGE SCALE GENOMIC DNA]</scope>
    <source>
        <strain>cv. Columbia</strain>
    </source>
</reference>
<reference key="2">
    <citation type="journal article" date="2017" name="Plant J.">
        <title>Araport11: a complete reannotation of the Arabidopsis thaliana reference genome.</title>
        <authorList>
            <person name="Cheng C.Y."/>
            <person name="Krishnakumar V."/>
            <person name="Chan A.P."/>
            <person name="Thibaud-Nissen F."/>
            <person name="Schobel S."/>
            <person name="Town C.D."/>
        </authorList>
    </citation>
    <scope>GENOME REANNOTATION</scope>
    <source>
        <strain>cv. Columbia</strain>
    </source>
</reference>
<reference key="3">
    <citation type="journal article" date="2003" name="Science">
        <title>Empirical analysis of transcriptional activity in the Arabidopsis genome.</title>
        <authorList>
            <person name="Yamada K."/>
            <person name="Lim J."/>
            <person name="Dale J.M."/>
            <person name="Chen H."/>
            <person name="Shinn P."/>
            <person name="Palm C.J."/>
            <person name="Southwick A.M."/>
            <person name="Wu H.C."/>
            <person name="Kim C.J."/>
            <person name="Nguyen M."/>
            <person name="Pham P.K."/>
            <person name="Cheuk R.F."/>
            <person name="Karlin-Newmann G."/>
            <person name="Liu S.X."/>
            <person name="Lam B."/>
            <person name="Sakano H."/>
            <person name="Wu T."/>
            <person name="Yu G."/>
            <person name="Miranda M."/>
            <person name="Quach H.L."/>
            <person name="Tripp M."/>
            <person name="Chang C.H."/>
            <person name="Lee J.M."/>
            <person name="Toriumi M.J."/>
            <person name="Chan M.M."/>
            <person name="Tang C.C."/>
            <person name="Onodera C.S."/>
            <person name="Deng J.M."/>
            <person name="Akiyama K."/>
            <person name="Ansari Y."/>
            <person name="Arakawa T."/>
            <person name="Banh J."/>
            <person name="Banno F."/>
            <person name="Bowser L."/>
            <person name="Brooks S.Y."/>
            <person name="Carninci P."/>
            <person name="Chao Q."/>
            <person name="Choy N."/>
            <person name="Enju A."/>
            <person name="Goldsmith A.D."/>
            <person name="Gurjal M."/>
            <person name="Hansen N.F."/>
            <person name="Hayashizaki Y."/>
            <person name="Johnson-Hopson C."/>
            <person name="Hsuan V.W."/>
            <person name="Iida K."/>
            <person name="Karnes M."/>
            <person name="Khan S."/>
            <person name="Koesema E."/>
            <person name="Ishida J."/>
            <person name="Jiang P.X."/>
            <person name="Jones T."/>
            <person name="Kawai J."/>
            <person name="Kamiya A."/>
            <person name="Meyers C."/>
            <person name="Nakajima M."/>
            <person name="Narusaka M."/>
            <person name="Seki M."/>
            <person name="Sakurai T."/>
            <person name="Satou M."/>
            <person name="Tamse R."/>
            <person name="Vaysberg M."/>
            <person name="Wallender E.K."/>
            <person name="Wong C."/>
            <person name="Yamamura Y."/>
            <person name="Yuan S."/>
            <person name="Shinozaki K."/>
            <person name="Davis R.W."/>
            <person name="Theologis A."/>
            <person name="Ecker J.R."/>
        </authorList>
    </citation>
    <scope>NUCLEOTIDE SEQUENCE [LARGE SCALE MRNA]</scope>
    <source>
        <strain>cv. Columbia</strain>
    </source>
</reference>
<reference key="4">
    <citation type="submission" date="2004-07" db="EMBL/GenBank/DDBJ databases">
        <title>Arabidopsis ORF clones.</title>
        <authorList>
            <person name="Cheuk R.F."/>
            <person name="Chen H."/>
            <person name="Kim C.J."/>
            <person name="Shinn P."/>
            <person name="Ecker J.R."/>
        </authorList>
    </citation>
    <scope>NUCLEOTIDE SEQUENCE [LARGE SCALE MRNA]</scope>
    <source>
        <strain>cv. Columbia</strain>
    </source>
</reference>
<reference key="5">
    <citation type="submission" date="2006-07" db="EMBL/GenBank/DDBJ databases">
        <title>Large-scale analysis of RIKEN Arabidopsis full-length (RAFL) cDNAs.</title>
        <authorList>
            <person name="Totoki Y."/>
            <person name="Seki M."/>
            <person name="Ishida J."/>
            <person name="Nakajima M."/>
            <person name="Enju A."/>
            <person name="Kamiya A."/>
            <person name="Narusaka M."/>
            <person name="Shin-i T."/>
            <person name="Nakagawa M."/>
            <person name="Sakamoto N."/>
            <person name="Oishi K."/>
            <person name="Kohara Y."/>
            <person name="Kobayashi M."/>
            <person name="Toyoda A."/>
            <person name="Sakaki Y."/>
            <person name="Sakurai T."/>
            <person name="Iida K."/>
            <person name="Akiyama K."/>
            <person name="Satou M."/>
            <person name="Toyoda T."/>
            <person name="Konagaya A."/>
            <person name="Carninci P."/>
            <person name="Kawai J."/>
            <person name="Hayashizaki Y."/>
            <person name="Shinozaki K."/>
        </authorList>
    </citation>
    <scope>NUCLEOTIDE SEQUENCE [LARGE SCALE MRNA]</scope>
    <source>
        <strain>cv. Columbia</strain>
    </source>
</reference>
<reference key="6">
    <citation type="journal article" date="2007" name="Phytochemistry">
        <title>Dirigent proteins in conifer defense II: Extended gene discovery, phylogeny, and constitutive and stress-induced gene expression in spruce (Picea spp.).</title>
        <authorList>
            <person name="Ralph S.G."/>
            <person name="Jancsik S."/>
            <person name="Bohlmann J."/>
        </authorList>
    </citation>
    <scope>GENE FAMILY</scope>
    <scope>NOMENCLATURE</scope>
</reference>
<comment type="function">
    <text evidence="1">Dirigent proteins impart stereoselectivity on the phenoxy radical-coupling reaction, yielding optically active lignans from two molecules of coniferyl alcohol in the biosynthesis of lignans, flavonolignans, and alkaloids and thus plays a central role in plant secondary metabolism.</text>
</comment>
<comment type="subunit">
    <text evidence="1">Homodimer.</text>
</comment>
<comment type="subcellular location">
    <subcellularLocation>
        <location evidence="1">Secreted</location>
        <location evidence="1">Extracellular space</location>
        <location evidence="1">Apoplast</location>
    </subcellularLocation>
</comment>
<comment type="similarity">
    <text evidence="3">Belongs to the plant dirigent protein family.</text>
</comment>
<comment type="sequence caution" evidence="3">
    <conflict type="erroneous gene model prediction">
        <sequence resource="EMBL-CDS" id="AAD29806"/>
    </conflict>
</comment>
<name>DIR23_ARATH</name>
<organism>
    <name type="scientific">Arabidopsis thaliana</name>
    <name type="common">Mouse-ear cress</name>
    <dbReference type="NCBI Taxonomy" id="3702"/>
    <lineage>
        <taxon>Eukaryota</taxon>
        <taxon>Viridiplantae</taxon>
        <taxon>Streptophyta</taxon>
        <taxon>Embryophyta</taxon>
        <taxon>Tracheophyta</taxon>
        <taxon>Spermatophyta</taxon>
        <taxon>Magnoliopsida</taxon>
        <taxon>eudicotyledons</taxon>
        <taxon>Gunneridae</taxon>
        <taxon>Pentapetalae</taxon>
        <taxon>rosids</taxon>
        <taxon>malvids</taxon>
        <taxon>Brassicales</taxon>
        <taxon>Brassicaceae</taxon>
        <taxon>Camelineae</taxon>
        <taxon>Arabidopsis</taxon>
    </lineage>
</organism>